<proteinExistence type="inferred from homology"/>
<keyword id="KW-0067">ATP-binding</keyword>
<keyword id="KW-0997">Cell inner membrane</keyword>
<keyword id="KW-1003">Cell membrane</keyword>
<keyword id="KW-0418">Kinase</keyword>
<keyword id="KW-0444">Lipid biosynthesis</keyword>
<keyword id="KW-0443">Lipid metabolism</keyword>
<keyword id="KW-0460">Magnesium</keyword>
<keyword id="KW-0472">Membrane</keyword>
<keyword id="KW-0479">Metal-binding</keyword>
<keyword id="KW-0547">Nucleotide-binding</keyword>
<keyword id="KW-0594">Phospholipid biosynthesis</keyword>
<keyword id="KW-1208">Phospholipid metabolism</keyword>
<keyword id="KW-1185">Reference proteome</keyword>
<keyword id="KW-0808">Transferase</keyword>
<keyword id="KW-0812">Transmembrane</keyword>
<keyword id="KW-1133">Transmembrane helix</keyword>
<reference key="1">
    <citation type="journal article" date="2002" name="Proc. Natl. Acad. Sci. U.S.A.">
        <title>Extensive mosaic structure revealed by the complete genome sequence of uropathogenic Escherichia coli.</title>
        <authorList>
            <person name="Welch R.A."/>
            <person name="Burland V."/>
            <person name="Plunkett G. III"/>
            <person name="Redford P."/>
            <person name="Roesch P."/>
            <person name="Rasko D."/>
            <person name="Buckles E.L."/>
            <person name="Liou S.-R."/>
            <person name="Boutin A."/>
            <person name="Hackett J."/>
            <person name="Stroud D."/>
            <person name="Mayhew G.F."/>
            <person name="Rose D.J."/>
            <person name="Zhou S."/>
            <person name="Schwartz D.C."/>
            <person name="Perna N.T."/>
            <person name="Mobley H.L.T."/>
            <person name="Donnenberg M.S."/>
            <person name="Blattner F.R."/>
        </authorList>
    </citation>
    <scope>NUCLEOTIDE SEQUENCE [LARGE SCALE GENOMIC DNA]</scope>
    <source>
        <strain>CFT073 / ATCC 700928 / UPEC</strain>
    </source>
</reference>
<comment type="function">
    <text evidence="2">Catalyzes the ATP-dependent phosphorylation of sn-l,2-diacylglycerol (DAG) to phosphatidic acid. Involved in the recycling of diacylglycerol produced as a by-product during membrane-derived oligosaccharide (MDO) biosynthesis.</text>
</comment>
<comment type="catalytic activity">
    <reaction evidence="2">
        <text>a 1,2-diacyl-sn-glycerol + ATP = a 1,2-diacyl-sn-glycero-3-phosphate + ADP + H(+)</text>
        <dbReference type="Rhea" id="RHEA:10272"/>
        <dbReference type="ChEBI" id="CHEBI:15378"/>
        <dbReference type="ChEBI" id="CHEBI:17815"/>
        <dbReference type="ChEBI" id="CHEBI:30616"/>
        <dbReference type="ChEBI" id="CHEBI:58608"/>
        <dbReference type="ChEBI" id="CHEBI:456216"/>
        <dbReference type="EC" id="2.7.1.107"/>
    </reaction>
</comment>
<comment type="cofactor">
    <cofactor evidence="2">
        <name>Mg(2+)</name>
        <dbReference type="ChEBI" id="CHEBI:18420"/>
    </cofactor>
</comment>
<comment type="subcellular location">
    <subcellularLocation>
        <location evidence="2">Cell inner membrane</location>
        <topology evidence="2">Multi-pass membrane protein</topology>
    </subcellularLocation>
</comment>
<comment type="similarity">
    <text evidence="4">Belongs to the bacterial diacylglycerol kinase family.</text>
</comment>
<feature type="initiator methionine" description="Removed" evidence="1">
    <location>
        <position position="1"/>
    </location>
</feature>
<feature type="chain" id="PRO_0000195262" description="Diacylglycerol kinase">
    <location>
        <begin position="2"/>
        <end position="122"/>
    </location>
</feature>
<feature type="transmembrane region" description="Helical" evidence="3">
    <location>
        <begin position="35"/>
        <end position="55"/>
    </location>
</feature>
<feature type="transmembrane region" description="Helical" evidence="3">
    <location>
        <begin position="57"/>
        <end position="77"/>
    </location>
</feature>
<feature type="transmembrane region" description="Helical" evidence="3">
    <location>
        <begin position="98"/>
        <end position="118"/>
    </location>
</feature>
<feature type="active site" description="Proton acceptor" evidence="2">
    <location>
        <position position="70"/>
    </location>
</feature>
<feature type="binding site" evidence="2">
    <location>
        <position position="10"/>
    </location>
    <ligand>
        <name>ATP</name>
        <dbReference type="ChEBI" id="CHEBI:30616"/>
    </ligand>
</feature>
<feature type="binding site" evidence="2">
    <location>
        <position position="10"/>
    </location>
    <ligand>
        <name>substrate</name>
    </ligand>
</feature>
<feature type="binding site" evidence="2">
    <location>
        <begin position="14"/>
        <end position="19"/>
    </location>
    <ligand>
        <name>substrate</name>
    </ligand>
</feature>
<feature type="binding site" evidence="2">
    <location>
        <position position="17"/>
    </location>
    <ligand>
        <name>ATP</name>
        <dbReference type="ChEBI" id="CHEBI:30616"/>
    </ligand>
</feature>
<feature type="binding site" evidence="2">
    <location>
        <begin position="23"/>
        <end position="26"/>
    </location>
    <ligand>
        <name>substrate</name>
    </ligand>
</feature>
<feature type="binding site" evidence="2">
    <location>
        <position position="29"/>
    </location>
    <ligand>
        <name>a divalent metal cation</name>
        <dbReference type="ChEBI" id="CHEBI:60240"/>
    </ligand>
</feature>
<feature type="binding site" evidence="2">
    <location>
        <position position="29"/>
    </location>
    <ligand>
        <name>ATP</name>
        <dbReference type="ChEBI" id="CHEBI:30616"/>
    </ligand>
</feature>
<feature type="binding site" evidence="2">
    <location>
        <begin position="31"/>
        <end position="35"/>
    </location>
    <ligand>
        <name>substrate</name>
    </ligand>
</feature>
<feature type="binding site" evidence="2">
    <location>
        <begin position="48"/>
        <end position="51"/>
    </location>
    <ligand>
        <name>substrate</name>
    </ligand>
</feature>
<feature type="binding site" evidence="2">
    <location>
        <position position="56"/>
    </location>
    <ligand>
        <name>substrate</name>
    </ligand>
</feature>
<feature type="binding site" evidence="2">
    <location>
        <position position="70"/>
    </location>
    <ligand>
        <name>substrate</name>
    </ligand>
</feature>
<feature type="binding site" evidence="2">
    <location>
        <position position="77"/>
    </location>
    <ligand>
        <name>a divalent metal cation</name>
        <dbReference type="ChEBI" id="CHEBI:60240"/>
    </ligand>
</feature>
<feature type="binding site" evidence="2">
    <location>
        <position position="77"/>
    </location>
    <ligand>
        <name>ATP</name>
        <dbReference type="ChEBI" id="CHEBI:30616"/>
    </ligand>
</feature>
<feature type="binding site" evidence="2">
    <location>
        <begin position="86"/>
        <end position="88"/>
    </location>
    <ligand>
        <name>ATP</name>
        <dbReference type="ChEBI" id="CHEBI:30616"/>
    </ligand>
</feature>
<feature type="binding site" evidence="2">
    <location>
        <begin position="95"/>
        <end position="96"/>
    </location>
    <ligand>
        <name>ATP</name>
        <dbReference type="ChEBI" id="CHEBI:30616"/>
    </ligand>
</feature>
<feature type="binding site" evidence="2">
    <location>
        <position position="99"/>
    </location>
    <ligand>
        <name>substrate</name>
    </ligand>
</feature>
<feature type="binding site" evidence="2">
    <location>
        <begin position="113"/>
        <end position="118"/>
    </location>
    <ligand>
        <name>substrate</name>
    </ligand>
</feature>
<gene>
    <name type="primary">dgkA</name>
    <name type="ordered locus">c5013</name>
</gene>
<organism>
    <name type="scientific">Escherichia coli O6:H1 (strain CFT073 / ATCC 700928 / UPEC)</name>
    <dbReference type="NCBI Taxonomy" id="199310"/>
    <lineage>
        <taxon>Bacteria</taxon>
        <taxon>Pseudomonadati</taxon>
        <taxon>Pseudomonadota</taxon>
        <taxon>Gammaproteobacteria</taxon>
        <taxon>Enterobacterales</taxon>
        <taxon>Enterobacteriaceae</taxon>
        <taxon>Escherichia</taxon>
    </lineage>
</organism>
<dbReference type="EC" id="2.7.1.107" evidence="2"/>
<dbReference type="EMBL" id="AE014075">
    <property type="protein sequence ID" value="AAN83439.1"/>
    <property type="molecule type" value="Genomic_DNA"/>
</dbReference>
<dbReference type="RefSeq" id="WP_000002907.1">
    <property type="nucleotide sequence ID" value="NZ_CP051263.1"/>
</dbReference>
<dbReference type="BMRB" id="P0ABN2"/>
<dbReference type="SMR" id="P0ABN2"/>
<dbReference type="STRING" id="199310.c5013"/>
<dbReference type="GeneID" id="93777789"/>
<dbReference type="KEGG" id="ecc:c5013"/>
<dbReference type="eggNOG" id="COG0818">
    <property type="taxonomic scope" value="Bacteria"/>
</dbReference>
<dbReference type="HOGENOM" id="CLU_112343_3_1_6"/>
<dbReference type="BioCyc" id="ECOL199310:C5013-MONOMER"/>
<dbReference type="Proteomes" id="UP000001410">
    <property type="component" value="Chromosome"/>
</dbReference>
<dbReference type="GO" id="GO:0005886">
    <property type="term" value="C:plasma membrane"/>
    <property type="evidence" value="ECO:0007669"/>
    <property type="project" value="UniProtKB-SubCell"/>
</dbReference>
<dbReference type="GO" id="GO:0005524">
    <property type="term" value="F:ATP binding"/>
    <property type="evidence" value="ECO:0007669"/>
    <property type="project" value="UniProtKB-KW"/>
</dbReference>
<dbReference type="GO" id="GO:0004143">
    <property type="term" value="F:ATP-dependent diacylglycerol kinase activity"/>
    <property type="evidence" value="ECO:0007669"/>
    <property type="project" value="UniProtKB-EC"/>
</dbReference>
<dbReference type="GO" id="GO:0046872">
    <property type="term" value="F:metal ion binding"/>
    <property type="evidence" value="ECO:0007669"/>
    <property type="project" value="UniProtKB-KW"/>
</dbReference>
<dbReference type="GO" id="GO:0006654">
    <property type="term" value="P:phosphatidic acid biosynthetic process"/>
    <property type="evidence" value="ECO:0007669"/>
    <property type="project" value="InterPro"/>
</dbReference>
<dbReference type="CDD" id="cd14264">
    <property type="entry name" value="DAGK_IM"/>
    <property type="match status" value="1"/>
</dbReference>
<dbReference type="FunFam" id="1.10.287.3610:FF:000001">
    <property type="entry name" value="Diacylglycerol kinase"/>
    <property type="match status" value="1"/>
</dbReference>
<dbReference type="Gene3D" id="1.10.287.3610">
    <property type="match status" value="1"/>
</dbReference>
<dbReference type="InterPro" id="IPR000829">
    <property type="entry name" value="DAGK"/>
</dbReference>
<dbReference type="InterPro" id="IPR033718">
    <property type="entry name" value="DAGK_prok"/>
</dbReference>
<dbReference type="InterPro" id="IPR036945">
    <property type="entry name" value="DAGK_sf"/>
</dbReference>
<dbReference type="PANTHER" id="PTHR34299">
    <property type="entry name" value="DIACYLGLYCEROL KINASE"/>
    <property type="match status" value="1"/>
</dbReference>
<dbReference type="PANTHER" id="PTHR34299:SF1">
    <property type="entry name" value="DIACYLGLYCEROL KINASE"/>
    <property type="match status" value="1"/>
</dbReference>
<dbReference type="Pfam" id="PF01219">
    <property type="entry name" value="DAGK_prokar"/>
    <property type="match status" value="1"/>
</dbReference>
<dbReference type="PROSITE" id="PS01069">
    <property type="entry name" value="DAGK_PROKAR"/>
    <property type="match status" value="1"/>
</dbReference>
<sequence length="122" mass="13245">MANNTTGFTRIIKAAGYSWKGLRAAWINEAAFRQEGVAVLLAVVIACWLDVDAITRVLLISSVMLVMIVEILNSAIEAVVDRIGSEYHELSGRAKDMGSAAVLIAIIVAVITWCILLWSHFG</sequence>
<evidence type="ECO:0000250" key="1"/>
<evidence type="ECO:0000250" key="2">
    <source>
        <dbReference type="UniProtKB" id="P0ABN1"/>
    </source>
</evidence>
<evidence type="ECO:0000255" key="3"/>
<evidence type="ECO:0000305" key="4"/>
<name>KDGL_ECOL6</name>
<accession>P0ABN2</accession>
<accession>P00556</accession>
<protein>
    <recommendedName>
        <fullName evidence="2">Diacylglycerol kinase</fullName>
        <shortName evidence="2">DAGK</shortName>
        <ecNumber evidence="2">2.7.1.107</ecNumber>
    </recommendedName>
    <alternativeName>
        <fullName evidence="2">Diglyceride kinase</fullName>
        <shortName evidence="2">DGK</shortName>
    </alternativeName>
</protein>